<comment type="function">
    <text>Inhibits trypsin stoichiometrically.</text>
</comment>
<comment type="similarity">
    <text evidence="2">Belongs to the protease inhibitor I3 (leguminous Kunitz-type inhibitor) family.</text>
</comment>
<sequence length="176" mass="19784">ELVDVEGEDVVNGGTYYMLPGIEGDGGGMEGAKTGRETCPITVVQSRNDVSNGEPITIESPFRSYFIPKGSLVRIGFTSPPKCAPSPWWTLALDRPQGLSVKLGEYESTEFNYSFKFEDVSSKLHSYKLSYCVREEWYEDYICKNIGIYRDSKGYRRLVVNEENPLVVVLKKVESS</sequence>
<evidence type="ECO:0000250" key="1"/>
<evidence type="ECO:0000305" key="2"/>
<protein>
    <recommendedName>
        <fullName>Trypsin inhibitor 1B</fullName>
    </recommendedName>
    <alternativeName>
        <fullName>ETIB</fullName>
    </alternativeName>
</protein>
<name>IT1B_ERYVA</name>
<keyword id="KW-0903">Direct protein sequencing</keyword>
<keyword id="KW-1015">Disulfide bond</keyword>
<keyword id="KW-0646">Protease inhibitor</keyword>
<keyword id="KW-0722">Serine protease inhibitor</keyword>
<dbReference type="PIR" id="JH0781">
    <property type="entry name" value="JH0781"/>
</dbReference>
<dbReference type="SMR" id="P81365"/>
<dbReference type="GO" id="GO:0004867">
    <property type="term" value="F:serine-type endopeptidase inhibitor activity"/>
    <property type="evidence" value="ECO:0007669"/>
    <property type="project" value="UniProtKB-KW"/>
</dbReference>
<dbReference type="CDD" id="cd23362">
    <property type="entry name" value="beta-trefoil_STI_WCI3-like"/>
    <property type="match status" value="1"/>
</dbReference>
<dbReference type="Gene3D" id="2.80.10.50">
    <property type="match status" value="1"/>
</dbReference>
<dbReference type="InterPro" id="IPR011065">
    <property type="entry name" value="Kunitz_inhibitor_STI-like_sf"/>
</dbReference>
<dbReference type="InterPro" id="IPR002160">
    <property type="entry name" value="Prot_inh_Kunz-lg"/>
</dbReference>
<dbReference type="PANTHER" id="PTHR33107">
    <property type="entry name" value="KUNITZ TRYPSIN INHIBITOR 2"/>
    <property type="match status" value="1"/>
</dbReference>
<dbReference type="PANTHER" id="PTHR33107:SF81">
    <property type="entry name" value="TRYPSIN INHIBITOR A"/>
    <property type="match status" value="1"/>
</dbReference>
<dbReference type="Pfam" id="PF00197">
    <property type="entry name" value="Kunitz_legume"/>
    <property type="match status" value="1"/>
</dbReference>
<dbReference type="PRINTS" id="PR00291">
    <property type="entry name" value="KUNITZINHBTR"/>
</dbReference>
<dbReference type="SMART" id="SM00452">
    <property type="entry name" value="STI"/>
    <property type="match status" value="1"/>
</dbReference>
<dbReference type="SUPFAM" id="SSF50386">
    <property type="entry name" value="STI-like"/>
    <property type="match status" value="1"/>
</dbReference>
<dbReference type="PROSITE" id="PS00283">
    <property type="entry name" value="SOYBEAN_KUNITZ"/>
    <property type="match status" value="1"/>
</dbReference>
<accession>P81365</accession>
<proteinExistence type="evidence at protein level"/>
<organism>
    <name type="scientific">Erythrina variegata</name>
    <name type="common">Indian coral tree</name>
    <name type="synonym">Erythrina indica</name>
    <dbReference type="NCBI Taxonomy" id="3845"/>
    <lineage>
        <taxon>Eukaryota</taxon>
        <taxon>Viridiplantae</taxon>
        <taxon>Streptophyta</taxon>
        <taxon>Embryophyta</taxon>
        <taxon>Tracheophyta</taxon>
        <taxon>Spermatophyta</taxon>
        <taxon>Magnoliopsida</taxon>
        <taxon>eudicotyledons</taxon>
        <taxon>Gunneridae</taxon>
        <taxon>Pentapetalae</taxon>
        <taxon>rosids</taxon>
        <taxon>fabids</taxon>
        <taxon>Fabales</taxon>
        <taxon>Fabaceae</taxon>
        <taxon>Papilionoideae</taxon>
        <taxon>50 kb inversion clade</taxon>
        <taxon>NPAAA clade</taxon>
        <taxon>indigoferoid/millettioid clade</taxon>
        <taxon>Phaseoleae</taxon>
        <taxon>Erythrina</taxon>
    </lineage>
</organism>
<reference key="1">
    <citation type="journal article" date="1992" name="Biosci. Biotechnol. Biochem.">
        <title>Isolation and primary structure of proteinase inhibitors from Erythrina variegata (Linn.) var. Orientalis seeds.</title>
        <authorList>
            <person name="Kouzuma Y."/>
            <person name="Suetake M."/>
            <person name="Kimura M."/>
            <person name="Yamasaki N."/>
        </authorList>
    </citation>
    <scope>PROTEIN SEQUENCE</scope>
    <source>
        <strain>Var. Orientalis</strain>
        <tissue>Seed</tissue>
    </source>
</reference>
<feature type="chain" id="PRO_0000083290" description="Trypsin inhibitor 1B">
    <location>
        <begin position="1"/>
        <end position="176"/>
    </location>
</feature>
<feature type="site" description="Reactive bond for trypsin" evidence="1">
    <location>
        <begin position="63"/>
        <end position="64"/>
    </location>
</feature>
<feature type="disulfide bond" evidence="1">
    <location>
        <begin position="39"/>
        <end position="83"/>
    </location>
</feature>
<feature type="disulfide bond" evidence="1">
    <location>
        <begin position="132"/>
        <end position="143"/>
    </location>
</feature>